<dbReference type="EMBL" id="AE016795">
    <property type="protein sequence ID" value="AAO08757.1"/>
    <property type="molecule type" value="Genomic_DNA"/>
</dbReference>
<dbReference type="RefSeq" id="WP_011078335.1">
    <property type="nucleotide sequence ID" value="NC_004459.3"/>
</dbReference>
<dbReference type="SMR" id="Q8DFJ1"/>
<dbReference type="KEGG" id="vvu:VV1_0220"/>
<dbReference type="HOGENOM" id="CLU_069313_0_2_6"/>
<dbReference type="Proteomes" id="UP000002275">
    <property type="component" value="Chromosome 1"/>
</dbReference>
<dbReference type="GO" id="GO:0009427">
    <property type="term" value="C:bacterial-type flagellum basal body, distal rod, L ring"/>
    <property type="evidence" value="ECO:0007669"/>
    <property type="project" value="InterPro"/>
</dbReference>
<dbReference type="GO" id="GO:0009279">
    <property type="term" value="C:cell outer membrane"/>
    <property type="evidence" value="ECO:0007669"/>
    <property type="project" value="UniProtKB-SubCell"/>
</dbReference>
<dbReference type="GO" id="GO:0003774">
    <property type="term" value="F:cytoskeletal motor activity"/>
    <property type="evidence" value="ECO:0007669"/>
    <property type="project" value="InterPro"/>
</dbReference>
<dbReference type="GO" id="GO:0071973">
    <property type="term" value="P:bacterial-type flagellum-dependent cell motility"/>
    <property type="evidence" value="ECO:0007669"/>
    <property type="project" value="InterPro"/>
</dbReference>
<dbReference type="HAMAP" id="MF_00415">
    <property type="entry name" value="FlgH"/>
    <property type="match status" value="1"/>
</dbReference>
<dbReference type="InterPro" id="IPR000527">
    <property type="entry name" value="Flag_Lring"/>
</dbReference>
<dbReference type="NCBIfam" id="NF001302">
    <property type="entry name" value="PRK00249.1-2"/>
    <property type="match status" value="1"/>
</dbReference>
<dbReference type="PANTHER" id="PTHR34933">
    <property type="entry name" value="FLAGELLAR L-RING PROTEIN"/>
    <property type="match status" value="1"/>
</dbReference>
<dbReference type="PANTHER" id="PTHR34933:SF1">
    <property type="entry name" value="FLAGELLAR L-RING PROTEIN"/>
    <property type="match status" value="1"/>
</dbReference>
<dbReference type="Pfam" id="PF02107">
    <property type="entry name" value="FlgH"/>
    <property type="match status" value="1"/>
</dbReference>
<dbReference type="PRINTS" id="PR01008">
    <property type="entry name" value="FLGLRINGFLGH"/>
</dbReference>
<dbReference type="PROSITE" id="PS51257">
    <property type="entry name" value="PROKAR_LIPOPROTEIN"/>
    <property type="match status" value="1"/>
</dbReference>
<proteinExistence type="inferred from homology"/>
<protein>
    <recommendedName>
        <fullName evidence="1">Flagellar L-ring protein</fullName>
    </recommendedName>
    <alternativeName>
        <fullName evidence="1">Basal body L-ring protein</fullName>
    </alternativeName>
</protein>
<keyword id="KW-0975">Bacterial flagellum</keyword>
<keyword id="KW-0998">Cell outer membrane</keyword>
<keyword id="KW-0449">Lipoprotein</keyword>
<keyword id="KW-0472">Membrane</keyword>
<keyword id="KW-0564">Palmitate</keyword>
<keyword id="KW-0732">Signal</keyword>
<reference key="1">
    <citation type="submission" date="2002-12" db="EMBL/GenBank/DDBJ databases">
        <title>Complete genome sequence of Vibrio vulnificus CMCP6.</title>
        <authorList>
            <person name="Rhee J.H."/>
            <person name="Kim S.Y."/>
            <person name="Chung S.S."/>
            <person name="Kim J.J."/>
            <person name="Moon Y.H."/>
            <person name="Jeong H."/>
            <person name="Choy H.E."/>
        </authorList>
    </citation>
    <scope>NUCLEOTIDE SEQUENCE [LARGE SCALE GENOMIC DNA]</scope>
    <source>
        <strain>CMCP6</strain>
    </source>
</reference>
<organism>
    <name type="scientific">Vibrio vulnificus (strain CMCP6)</name>
    <dbReference type="NCBI Taxonomy" id="216895"/>
    <lineage>
        <taxon>Bacteria</taxon>
        <taxon>Pseudomonadati</taxon>
        <taxon>Pseudomonadota</taxon>
        <taxon>Gammaproteobacteria</taxon>
        <taxon>Vibrionales</taxon>
        <taxon>Vibrionaceae</taxon>
        <taxon>Vibrio</taxon>
    </lineage>
</organism>
<sequence>MKRISLIALVTIMSGCTMLEPIETPEVVNATTVVDAVEGDKSKDESSGIVDTLRGRSDPVAGDPAWAPIHPKQQPEHYAAETGSLFSVNHLSNLYDDSKPRGVGDIITVTLDEKTNASKSANADLSKSNDSSMDPLEVGGQELKIDGKYNFSYNLTNSNNFTGDASAKQSNSISGYITVEVIEVLANGNLVIRGEKWLTLNTGDEYIRLSGTIRPDDISFDNTIASNRVSNARIQYSGTGTQQDMQEPGFLARFFNVSL</sequence>
<feature type="signal peptide" evidence="1">
    <location>
        <begin position="1"/>
        <end position="15"/>
    </location>
</feature>
<feature type="chain" id="PRO_0000009480" description="Flagellar L-ring protein">
    <location>
        <begin position="16"/>
        <end position="259"/>
    </location>
</feature>
<feature type="lipid moiety-binding region" description="N-palmitoyl cysteine" evidence="1">
    <location>
        <position position="16"/>
    </location>
</feature>
<feature type="lipid moiety-binding region" description="S-diacylglycerol cysteine" evidence="1">
    <location>
        <position position="16"/>
    </location>
</feature>
<name>FLGH_VIBVU</name>
<accession>Q8DFJ1</accession>
<comment type="function">
    <text evidence="1">Assembles around the rod to form the L-ring and probably protects the motor/basal body from shearing forces during rotation.</text>
</comment>
<comment type="subunit">
    <text evidence="1">The basal body constitutes a major portion of the flagellar organelle and consists of four rings (L,P,S, and M) mounted on a central rod.</text>
</comment>
<comment type="subcellular location">
    <subcellularLocation>
        <location evidence="1">Cell outer membrane</location>
        <topology evidence="1">Lipid-anchor</topology>
    </subcellularLocation>
    <subcellularLocation>
        <location evidence="1">Bacterial flagellum basal body</location>
    </subcellularLocation>
</comment>
<comment type="similarity">
    <text evidence="1">Belongs to the FlgH family.</text>
</comment>
<evidence type="ECO:0000255" key="1">
    <source>
        <dbReference type="HAMAP-Rule" id="MF_00415"/>
    </source>
</evidence>
<gene>
    <name evidence="1" type="primary">flgH</name>
    <name type="ordered locus">VV1_0220</name>
</gene>